<accession>A9IJC1</accession>
<organism>
    <name type="scientific">Bordetella petrii (strain ATCC BAA-461 / DSM 12804 / CCUG 43448)</name>
    <dbReference type="NCBI Taxonomy" id="340100"/>
    <lineage>
        <taxon>Bacteria</taxon>
        <taxon>Pseudomonadati</taxon>
        <taxon>Pseudomonadota</taxon>
        <taxon>Betaproteobacteria</taxon>
        <taxon>Burkholderiales</taxon>
        <taxon>Alcaligenaceae</taxon>
        <taxon>Bordetella</taxon>
    </lineage>
</organism>
<sequence length="123" mass="13588">MPRATLPPEARLHRPSEFAAALKGRRLARGAFFILSAAPSSPPPGQAAQARLGMVIAKRYAAHASTRNALKRVIREAFRHCRLELPPQDYVLRLHSKPAPATLTSLKRLARAEVDAHFARVRP</sequence>
<feature type="chain" id="PRO_1000194611" description="Ribonuclease P protein component">
    <location>
        <begin position="1"/>
        <end position="123"/>
    </location>
</feature>
<gene>
    <name evidence="1" type="primary">rnpA</name>
    <name type="ordered locus">Bpet5013</name>
</gene>
<dbReference type="EC" id="3.1.26.5" evidence="1"/>
<dbReference type="EMBL" id="AM902716">
    <property type="protein sequence ID" value="CAP45365.1"/>
    <property type="molecule type" value="Genomic_DNA"/>
</dbReference>
<dbReference type="SMR" id="A9IJC1"/>
<dbReference type="STRING" id="94624.Bpet5013"/>
<dbReference type="KEGG" id="bpt:Bpet5013"/>
<dbReference type="eggNOG" id="COG0594">
    <property type="taxonomic scope" value="Bacteria"/>
</dbReference>
<dbReference type="Proteomes" id="UP000001225">
    <property type="component" value="Chromosome"/>
</dbReference>
<dbReference type="GO" id="GO:0030677">
    <property type="term" value="C:ribonuclease P complex"/>
    <property type="evidence" value="ECO:0007669"/>
    <property type="project" value="TreeGrafter"/>
</dbReference>
<dbReference type="GO" id="GO:0042781">
    <property type="term" value="F:3'-tRNA processing endoribonuclease activity"/>
    <property type="evidence" value="ECO:0007669"/>
    <property type="project" value="TreeGrafter"/>
</dbReference>
<dbReference type="GO" id="GO:0004526">
    <property type="term" value="F:ribonuclease P activity"/>
    <property type="evidence" value="ECO:0007669"/>
    <property type="project" value="UniProtKB-UniRule"/>
</dbReference>
<dbReference type="GO" id="GO:0000049">
    <property type="term" value="F:tRNA binding"/>
    <property type="evidence" value="ECO:0007669"/>
    <property type="project" value="UniProtKB-UniRule"/>
</dbReference>
<dbReference type="GO" id="GO:0001682">
    <property type="term" value="P:tRNA 5'-leader removal"/>
    <property type="evidence" value="ECO:0007669"/>
    <property type="project" value="UniProtKB-UniRule"/>
</dbReference>
<dbReference type="Gene3D" id="3.30.230.10">
    <property type="match status" value="1"/>
</dbReference>
<dbReference type="HAMAP" id="MF_00227">
    <property type="entry name" value="RNase_P"/>
    <property type="match status" value="1"/>
</dbReference>
<dbReference type="InterPro" id="IPR020568">
    <property type="entry name" value="Ribosomal_Su5_D2-typ_SF"/>
</dbReference>
<dbReference type="InterPro" id="IPR014721">
    <property type="entry name" value="Ribsml_uS5_D2-typ_fold_subgr"/>
</dbReference>
<dbReference type="InterPro" id="IPR000100">
    <property type="entry name" value="RNase_P"/>
</dbReference>
<dbReference type="InterPro" id="IPR020539">
    <property type="entry name" value="RNase_P_CS"/>
</dbReference>
<dbReference type="NCBIfam" id="NF000707">
    <property type="entry name" value="PRK00038.1"/>
    <property type="match status" value="1"/>
</dbReference>
<dbReference type="PANTHER" id="PTHR33992">
    <property type="entry name" value="RIBONUCLEASE P PROTEIN COMPONENT"/>
    <property type="match status" value="1"/>
</dbReference>
<dbReference type="PANTHER" id="PTHR33992:SF1">
    <property type="entry name" value="RIBONUCLEASE P PROTEIN COMPONENT"/>
    <property type="match status" value="1"/>
</dbReference>
<dbReference type="Pfam" id="PF00825">
    <property type="entry name" value="Ribonuclease_P"/>
    <property type="match status" value="1"/>
</dbReference>
<dbReference type="SUPFAM" id="SSF54211">
    <property type="entry name" value="Ribosomal protein S5 domain 2-like"/>
    <property type="match status" value="1"/>
</dbReference>
<dbReference type="PROSITE" id="PS00648">
    <property type="entry name" value="RIBONUCLEASE_P"/>
    <property type="match status" value="1"/>
</dbReference>
<reference key="1">
    <citation type="journal article" date="2008" name="BMC Genomics">
        <title>The missing link: Bordetella petrii is endowed with both the metabolic versatility of environmental bacteria and virulence traits of pathogenic Bordetellae.</title>
        <authorList>
            <person name="Gross R."/>
            <person name="Guzman C.A."/>
            <person name="Sebaihia M."/>
            <person name="Martin dos Santos V.A.P."/>
            <person name="Pieper D.H."/>
            <person name="Koebnik R."/>
            <person name="Lechner M."/>
            <person name="Bartels D."/>
            <person name="Buhrmester J."/>
            <person name="Choudhuri J.V."/>
            <person name="Ebensen T."/>
            <person name="Gaigalat L."/>
            <person name="Herrmann S."/>
            <person name="Khachane A.N."/>
            <person name="Larisch C."/>
            <person name="Link S."/>
            <person name="Linke B."/>
            <person name="Meyer F."/>
            <person name="Mormann S."/>
            <person name="Nakunst D."/>
            <person name="Rueckert C."/>
            <person name="Schneiker-Bekel S."/>
            <person name="Schulze K."/>
            <person name="Voerholter F.-J."/>
            <person name="Yevsa T."/>
            <person name="Engle J.T."/>
            <person name="Goldman W.E."/>
            <person name="Puehler A."/>
            <person name="Goebel U.B."/>
            <person name="Goesmann A."/>
            <person name="Bloecker H."/>
            <person name="Kaiser O."/>
            <person name="Martinez-Arias R."/>
        </authorList>
    </citation>
    <scope>NUCLEOTIDE SEQUENCE [LARGE SCALE GENOMIC DNA]</scope>
    <source>
        <strain>ATCC BAA-461 / DSM 12804 / CCUG 43448</strain>
    </source>
</reference>
<name>RNPA_BORPD</name>
<protein>
    <recommendedName>
        <fullName evidence="1">Ribonuclease P protein component</fullName>
        <shortName evidence="1">RNase P protein</shortName>
        <shortName evidence="1">RNaseP protein</shortName>
        <ecNumber evidence="1">3.1.26.5</ecNumber>
    </recommendedName>
    <alternativeName>
        <fullName evidence="1">Protein C5</fullName>
    </alternativeName>
</protein>
<evidence type="ECO:0000255" key="1">
    <source>
        <dbReference type="HAMAP-Rule" id="MF_00227"/>
    </source>
</evidence>
<proteinExistence type="inferred from homology"/>
<comment type="function">
    <text evidence="1">RNaseP catalyzes the removal of the 5'-leader sequence from pre-tRNA to produce the mature 5'-terminus. It can also cleave other RNA substrates such as 4.5S RNA. The protein component plays an auxiliary but essential role in vivo by binding to the 5'-leader sequence and broadening the substrate specificity of the ribozyme.</text>
</comment>
<comment type="catalytic activity">
    <reaction evidence="1">
        <text>Endonucleolytic cleavage of RNA, removing 5'-extranucleotides from tRNA precursor.</text>
        <dbReference type="EC" id="3.1.26.5"/>
    </reaction>
</comment>
<comment type="subunit">
    <text evidence="1">Consists of a catalytic RNA component (M1 or rnpB) and a protein subunit.</text>
</comment>
<comment type="similarity">
    <text evidence="1">Belongs to the RnpA family.</text>
</comment>
<keyword id="KW-0255">Endonuclease</keyword>
<keyword id="KW-0378">Hydrolase</keyword>
<keyword id="KW-0540">Nuclease</keyword>
<keyword id="KW-0694">RNA-binding</keyword>
<keyword id="KW-0819">tRNA processing</keyword>